<gene>
    <name evidence="1" type="primary">glgB</name>
    <name type="ordered locus">SRU_0846</name>
</gene>
<proteinExistence type="inferred from homology"/>
<protein>
    <recommendedName>
        <fullName evidence="1">1,4-alpha-glucan branching enzyme GlgB</fullName>
        <ecNumber evidence="1">2.4.1.18</ecNumber>
    </recommendedName>
    <alternativeName>
        <fullName evidence="1">1,4-alpha-D-glucan:1,4-alpha-D-glucan 6-glucosyl-transferase</fullName>
    </alternativeName>
    <alternativeName>
        <fullName evidence="1">Alpha-(1-&gt;4)-glucan branching enzyme</fullName>
    </alternativeName>
    <alternativeName>
        <fullName evidence="1">Glycogen branching enzyme</fullName>
        <shortName evidence="1">BE</shortName>
    </alternativeName>
</protein>
<name>GLGB_SALRD</name>
<accession>Q2S4A0</accession>
<keyword id="KW-0119">Carbohydrate metabolism</keyword>
<keyword id="KW-0320">Glycogen biosynthesis</keyword>
<keyword id="KW-0321">Glycogen metabolism</keyword>
<keyword id="KW-0328">Glycosyltransferase</keyword>
<keyword id="KW-1185">Reference proteome</keyword>
<keyword id="KW-0808">Transferase</keyword>
<sequence length="622" mass="71450">MPHLTDDDIYYWRQGTHTHSYERMGAHPNQRGTWFGVWAPNADRVEVTGDFNDWRFGADVLDRREGGLWEGYVRGAQPGDKYKYHLRAGGEWFDRTDPYAFRMEPPAQNTYEGLSALITDLDTYTWGDDAWMTTREGPSGIDGPLSIYEVHLGSWRHEEHGASLSYREVAEPLADHVQNLGFTHVEFLPLAEHPYYGSWGYQILGYYAPTFRYGDPEGLMHLIDTLHQRGIGVIMDWVPGHFATDPQGLTYFDGSHLFEYEDPLMREHPDWGTRVFDFGKNGVRNFLLSNALFWMDKYHVDGLRVDAVASMLYRDYSREGDWSPNVHGGRENLGAISLLQDTNEHVYDEYPEAIMLAEESTAWPGVTTPTEHGGLGFLYKWNMGWMHDTLEYASKEPVHRKHHHGDLTWTLSWAFSENYTLPLSHDEVVHGKNSLWSKMPGDDWQKAANLRLLYAHMFGHPGKKLLFMGGEFGQHREWDHDRALEWDLADEPLHEGLMEWLGDLNHLYQNAPALWNDQEDGFEWIAYDDRENSVLTYRRLNGDRSLVFVLNFTPVVREDYRIGATGDGRWHERLNSDSDVYGGSNVGNRGAVHSDPVEKHGHSHSLSLTLPPLGALVLEPAE</sequence>
<organism>
    <name type="scientific">Salinibacter ruber (strain DSM 13855 / M31)</name>
    <dbReference type="NCBI Taxonomy" id="309807"/>
    <lineage>
        <taxon>Bacteria</taxon>
        <taxon>Pseudomonadati</taxon>
        <taxon>Rhodothermota</taxon>
        <taxon>Rhodothermia</taxon>
        <taxon>Rhodothermales</taxon>
        <taxon>Salinibacteraceae</taxon>
        <taxon>Salinibacter</taxon>
    </lineage>
</organism>
<dbReference type="EC" id="2.4.1.18" evidence="1"/>
<dbReference type="EMBL" id="CP000159">
    <property type="protein sequence ID" value="ABC44792.1"/>
    <property type="molecule type" value="Genomic_DNA"/>
</dbReference>
<dbReference type="RefSeq" id="WP_011403610.1">
    <property type="nucleotide sequence ID" value="NC_007677.1"/>
</dbReference>
<dbReference type="RefSeq" id="YP_444981.1">
    <property type="nucleotide sequence ID" value="NC_007677.1"/>
</dbReference>
<dbReference type="SMR" id="Q2S4A0"/>
<dbReference type="STRING" id="309807.SRU_0846"/>
<dbReference type="CAZy" id="CBM48">
    <property type="family name" value="Carbohydrate-Binding Module Family 48"/>
</dbReference>
<dbReference type="CAZy" id="GH13">
    <property type="family name" value="Glycoside Hydrolase Family 13"/>
</dbReference>
<dbReference type="EnsemblBacteria" id="ABC44792">
    <property type="protein sequence ID" value="ABC44792"/>
    <property type="gene ID" value="SRU_0846"/>
</dbReference>
<dbReference type="KEGG" id="sru:SRU_0846"/>
<dbReference type="PATRIC" id="fig|309807.25.peg.872"/>
<dbReference type="eggNOG" id="COG0296">
    <property type="taxonomic scope" value="Bacteria"/>
</dbReference>
<dbReference type="HOGENOM" id="CLU_004245_3_2_10"/>
<dbReference type="OrthoDB" id="9761875at2"/>
<dbReference type="UniPathway" id="UPA00164"/>
<dbReference type="Proteomes" id="UP000008674">
    <property type="component" value="Chromosome"/>
</dbReference>
<dbReference type="GO" id="GO:0005829">
    <property type="term" value="C:cytosol"/>
    <property type="evidence" value="ECO:0007669"/>
    <property type="project" value="TreeGrafter"/>
</dbReference>
<dbReference type="GO" id="GO:0003844">
    <property type="term" value="F:1,4-alpha-glucan branching enzyme activity"/>
    <property type="evidence" value="ECO:0007669"/>
    <property type="project" value="UniProtKB-UniRule"/>
</dbReference>
<dbReference type="GO" id="GO:0043169">
    <property type="term" value="F:cation binding"/>
    <property type="evidence" value="ECO:0007669"/>
    <property type="project" value="InterPro"/>
</dbReference>
<dbReference type="GO" id="GO:0004553">
    <property type="term" value="F:hydrolase activity, hydrolyzing O-glycosyl compounds"/>
    <property type="evidence" value="ECO:0007669"/>
    <property type="project" value="InterPro"/>
</dbReference>
<dbReference type="GO" id="GO:0005978">
    <property type="term" value="P:glycogen biosynthetic process"/>
    <property type="evidence" value="ECO:0007669"/>
    <property type="project" value="UniProtKB-UniRule"/>
</dbReference>
<dbReference type="CDD" id="cd11322">
    <property type="entry name" value="AmyAc_Glg_BE"/>
    <property type="match status" value="1"/>
</dbReference>
<dbReference type="CDD" id="cd02855">
    <property type="entry name" value="E_set_GBE_prok_N"/>
    <property type="match status" value="1"/>
</dbReference>
<dbReference type="FunFam" id="2.60.40.1180:FF:000002">
    <property type="entry name" value="1,4-alpha-glucan branching enzyme GlgB"/>
    <property type="match status" value="1"/>
</dbReference>
<dbReference type="FunFam" id="3.20.20.80:FF:000003">
    <property type="entry name" value="1,4-alpha-glucan branching enzyme GlgB"/>
    <property type="match status" value="1"/>
</dbReference>
<dbReference type="Gene3D" id="3.20.20.80">
    <property type="entry name" value="Glycosidases"/>
    <property type="match status" value="1"/>
</dbReference>
<dbReference type="Gene3D" id="2.60.40.1180">
    <property type="entry name" value="Golgi alpha-mannosidase II"/>
    <property type="match status" value="1"/>
</dbReference>
<dbReference type="Gene3D" id="2.60.40.10">
    <property type="entry name" value="Immunoglobulins"/>
    <property type="match status" value="1"/>
</dbReference>
<dbReference type="HAMAP" id="MF_00685">
    <property type="entry name" value="GlgB"/>
    <property type="match status" value="1"/>
</dbReference>
<dbReference type="InterPro" id="IPR006048">
    <property type="entry name" value="A-amylase/branching_C"/>
</dbReference>
<dbReference type="InterPro" id="IPR037439">
    <property type="entry name" value="Branching_enzy"/>
</dbReference>
<dbReference type="InterPro" id="IPR006407">
    <property type="entry name" value="GlgB"/>
</dbReference>
<dbReference type="InterPro" id="IPR044143">
    <property type="entry name" value="GlgB_N_E_set_prok"/>
</dbReference>
<dbReference type="InterPro" id="IPR006047">
    <property type="entry name" value="Glyco_hydro_13_cat_dom"/>
</dbReference>
<dbReference type="InterPro" id="IPR004193">
    <property type="entry name" value="Glyco_hydro_13_N"/>
</dbReference>
<dbReference type="InterPro" id="IPR013780">
    <property type="entry name" value="Glyco_hydro_b"/>
</dbReference>
<dbReference type="InterPro" id="IPR017853">
    <property type="entry name" value="Glycoside_hydrolase_SF"/>
</dbReference>
<dbReference type="InterPro" id="IPR013783">
    <property type="entry name" value="Ig-like_fold"/>
</dbReference>
<dbReference type="InterPro" id="IPR014756">
    <property type="entry name" value="Ig_E-set"/>
</dbReference>
<dbReference type="NCBIfam" id="TIGR01515">
    <property type="entry name" value="branching_enzym"/>
    <property type="match status" value="1"/>
</dbReference>
<dbReference type="NCBIfam" id="NF003811">
    <property type="entry name" value="PRK05402.1"/>
    <property type="match status" value="1"/>
</dbReference>
<dbReference type="NCBIfam" id="NF008967">
    <property type="entry name" value="PRK12313.1"/>
    <property type="match status" value="1"/>
</dbReference>
<dbReference type="PANTHER" id="PTHR43651">
    <property type="entry name" value="1,4-ALPHA-GLUCAN-BRANCHING ENZYME"/>
    <property type="match status" value="1"/>
</dbReference>
<dbReference type="PANTHER" id="PTHR43651:SF3">
    <property type="entry name" value="1,4-ALPHA-GLUCAN-BRANCHING ENZYME"/>
    <property type="match status" value="1"/>
</dbReference>
<dbReference type="Pfam" id="PF00128">
    <property type="entry name" value="Alpha-amylase"/>
    <property type="match status" value="1"/>
</dbReference>
<dbReference type="Pfam" id="PF02806">
    <property type="entry name" value="Alpha-amylase_C"/>
    <property type="match status" value="1"/>
</dbReference>
<dbReference type="Pfam" id="PF02922">
    <property type="entry name" value="CBM_48"/>
    <property type="match status" value="1"/>
</dbReference>
<dbReference type="PIRSF" id="PIRSF000463">
    <property type="entry name" value="GlgB"/>
    <property type="match status" value="1"/>
</dbReference>
<dbReference type="SMART" id="SM00642">
    <property type="entry name" value="Aamy"/>
    <property type="match status" value="1"/>
</dbReference>
<dbReference type="SUPFAM" id="SSF51445">
    <property type="entry name" value="(Trans)glycosidases"/>
    <property type="match status" value="1"/>
</dbReference>
<dbReference type="SUPFAM" id="SSF81296">
    <property type="entry name" value="E set domains"/>
    <property type="match status" value="1"/>
</dbReference>
<dbReference type="SUPFAM" id="SSF51011">
    <property type="entry name" value="Glycosyl hydrolase domain"/>
    <property type="match status" value="1"/>
</dbReference>
<evidence type="ECO:0000255" key="1">
    <source>
        <dbReference type="HAMAP-Rule" id="MF_00685"/>
    </source>
</evidence>
<evidence type="ECO:0000256" key="2">
    <source>
        <dbReference type="SAM" id="MobiDB-lite"/>
    </source>
</evidence>
<feature type="chain" id="PRO_0000260696" description="1,4-alpha-glucan branching enzyme GlgB">
    <location>
        <begin position="1"/>
        <end position="622"/>
    </location>
</feature>
<feature type="region of interest" description="Disordered" evidence="2">
    <location>
        <begin position="581"/>
        <end position="606"/>
    </location>
</feature>
<feature type="active site" description="Nucleophile" evidence="1">
    <location>
        <position position="306"/>
    </location>
</feature>
<feature type="active site" description="Proton donor" evidence="1">
    <location>
        <position position="358"/>
    </location>
</feature>
<comment type="function">
    <text evidence="1">Catalyzes the formation of the alpha-1,6-glucosidic linkages in glycogen by scission of a 1,4-alpha-linked oligosaccharide from growing alpha-1,4-glucan chains and the subsequent attachment of the oligosaccharide to the alpha-1,6 position.</text>
</comment>
<comment type="catalytic activity">
    <reaction evidence="1">
        <text>Transfers a segment of a (1-&gt;4)-alpha-D-glucan chain to a primary hydroxy group in a similar glucan chain.</text>
        <dbReference type="EC" id="2.4.1.18"/>
    </reaction>
</comment>
<comment type="pathway">
    <text evidence="1">Glycan biosynthesis; glycogen biosynthesis.</text>
</comment>
<comment type="subunit">
    <text evidence="1">Monomer.</text>
</comment>
<comment type="similarity">
    <text evidence="1">Belongs to the glycosyl hydrolase 13 family. GlgB subfamily.</text>
</comment>
<reference key="1">
    <citation type="journal article" date="2005" name="Proc. Natl. Acad. Sci. U.S.A.">
        <title>The genome of Salinibacter ruber: convergence and gene exchange among hyperhalophilic bacteria and archaea.</title>
        <authorList>
            <person name="Mongodin E.F."/>
            <person name="Nelson K.E."/>
            <person name="Daugherty S."/>
            <person name="DeBoy R.T."/>
            <person name="Wister J."/>
            <person name="Khouri H."/>
            <person name="Weidman J."/>
            <person name="Walsh D.A."/>
            <person name="Papke R.T."/>
            <person name="Sanchez Perez G."/>
            <person name="Sharma A.K."/>
            <person name="Nesbo C.L."/>
            <person name="MacLeod D."/>
            <person name="Bapteste E."/>
            <person name="Doolittle W.F."/>
            <person name="Charlebois R.L."/>
            <person name="Legault B."/>
            <person name="Rodriguez-Valera F."/>
        </authorList>
    </citation>
    <scope>NUCLEOTIDE SEQUENCE [LARGE SCALE GENOMIC DNA]</scope>
    <source>
        <strain>DSM 13855 / CECT 5946 / M31</strain>
    </source>
</reference>